<reference key="1">
    <citation type="journal article" date="2009" name="PLoS Genet.">
        <title>Organised genome dynamics in the Escherichia coli species results in highly diverse adaptive paths.</title>
        <authorList>
            <person name="Touchon M."/>
            <person name="Hoede C."/>
            <person name="Tenaillon O."/>
            <person name="Barbe V."/>
            <person name="Baeriswyl S."/>
            <person name="Bidet P."/>
            <person name="Bingen E."/>
            <person name="Bonacorsi S."/>
            <person name="Bouchier C."/>
            <person name="Bouvet O."/>
            <person name="Calteau A."/>
            <person name="Chiapello H."/>
            <person name="Clermont O."/>
            <person name="Cruveiller S."/>
            <person name="Danchin A."/>
            <person name="Diard M."/>
            <person name="Dossat C."/>
            <person name="Karoui M.E."/>
            <person name="Frapy E."/>
            <person name="Garry L."/>
            <person name="Ghigo J.M."/>
            <person name="Gilles A.M."/>
            <person name="Johnson J."/>
            <person name="Le Bouguenec C."/>
            <person name="Lescat M."/>
            <person name="Mangenot S."/>
            <person name="Martinez-Jehanne V."/>
            <person name="Matic I."/>
            <person name="Nassif X."/>
            <person name="Oztas S."/>
            <person name="Petit M.A."/>
            <person name="Pichon C."/>
            <person name="Rouy Z."/>
            <person name="Ruf C.S."/>
            <person name="Schneider D."/>
            <person name="Tourret J."/>
            <person name="Vacherie B."/>
            <person name="Vallenet D."/>
            <person name="Medigue C."/>
            <person name="Rocha E.P.C."/>
            <person name="Denamur E."/>
        </authorList>
    </citation>
    <scope>NUCLEOTIDE SEQUENCE [LARGE SCALE GENOMIC DNA]</scope>
    <source>
        <strain>UMN026 / ExPEC</strain>
    </source>
</reference>
<name>YHBP_ECOLU</name>
<organism>
    <name type="scientific">Escherichia coli O17:K52:H18 (strain UMN026 / ExPEC)</name>
    <dbReference type="NCBI Taxonomy" id="585056"/>
    <lineage>
        <taxon>Bacteria</taxon>
        <taxon>Pseudomonadati</taxon>
        <taxon>Pseudomonadota</taxon>
        <taxon>Gammaproteobacteria</taxon>
        <taxon>Enterobacterales</taxon>
        <taxon>Enterobacteriaceae</taxon>
        <taxon>Escherichia</taxon>
    </lineage>
</organism>
<protein>
    <recommendedName>
        <fullName evidence="1">UPF0306 protein YhbP</fullName>
    </recommendedName>
</protein>
<proteinExistence type="inferred from homology"/>
<comment type="similarity">
    <text evidence="1">Belongs to the UPF0306 family.</text>
</comment>
<sequence length="147" mass="16763">METLTAISRWLAKQHVVTWCVQQEGELWCANAFYLFDAQKVAFYILTEEKTRHAQMSGPQAAVAGTVNGQPKTVALIRGVQFKGEIRRLEGEESDLARKAYNRRFPVARMLSAPVWEIRLDEIKFTDNTLGFGKKMIWLRNSGTEQA</sequence>
<gene>
    <name evidence="1" type="primary">yhbP</name>
    <name type="ordered locus">ECUMN_3634</name>
</gene>
<evidence type="ECO:0000255" key="1">
    <source>
        <dbReference type="HAMAP-Rule" id="MF_00764"/>
    </source>
</evidence>
<dbReference type="EMBL" id="CU928163">
    <property type="protein sequence ID" value="CAR14788.1"/>
    <property type="molecule type" value="Genomic_DNA"/>
</dbReference>
<dbReference type="RefSeq" id="WP_000449453.1">
    <property type="nucleotide sequence ID" value="NC_011751.1"/>
</dbReference>
<dbReference type="RefSeq" id="YP_002414293.1">
    <property type="nucleotide sequence ID" value="NC_011751.1"/>
</dbReference>
<dbReference type="SMR" id="B7NDD8"/>
<dbReference type="STRING" id="585056.ECUMN_3634"/>
<dbReference type="KEGG" id="eum:ECUMN_3634"/>
<dbReference type="PATRIC" id="fig|585056.7.peg.3814"/>
<dbReference type="HOGENOM" id="CLU_105087_3_0_6"/>
<dbReference type="Proteomes" id="UP000007097">
    <property type="component" value="Chromosome"/>
</dbReference>
<dbReference type="FunFam" id="2.30.110.10:FF:000003">
    <property type="entry name" value="UPF0306 protein YhbP"/>
    <property type="match status" value="1"/>
</dbReference>
<dbReference type="Gene3D" id="2.30.110.10">
    <property type="entry name" value="Electron Transport, Fmn-binding Protein, Chain A"/>
    <property type="match status" value="1"/>
</dbReference>
<dbReference type="HAMAP" id="MF_00764">
    <property type="entry name" value="UPF0306"/>
    <property type="match status" value="1"/>
</dbReference>
<dbReference type="InterPro" id="IPR012349">
    <property type="entry name" value="Split_barrel_FMN-bd"/>
</dbReference>
<dbReference type="InterPro" id="IPR011194">
    <property type="entry name" value="UPF0306"/>
</dbReference>
<dbReference type="NCBIfam" id="NF002900">
    <property type="entry name" value="PRK03467.1"/>
    <property type="match status" value="1"/>
</dbReference>
<dbReference type="PIRSF" id="PIRSF009554">
    <property type="entry name" value="UCP009554"/>
    <property type="match status" value="1"/>
</dbReference>
<dbReference type="SUPFAM" id="SSF50475">
    <property type="entry name" value="FMN-binding split barrel"/>
    <property type="match status" value="1"/>
</dbReference>
<accession>B7NDD8</accession>
<feature type="chain" id="PRO_1000198355" description="UPF0306 protein YhbP">
    <location>
        <begin position="1"/>
        <end position="147"/>
    </location>
</feature>